<name>OR5M3_HUMAN</name>
<feature type="chain" id="PRO_0000150605" description="Olfactory receptor 5M3">
    <location>
        <begin position="1"/>
        <end position="307"/>
    </location>
</feature>
<feature type="topological domain" description="Extracellular" evidence="1">
    <location>
        <begin position="1"/>
        <end position="23"/>
    </location>
</feature>
<feature type="transmembrane region" description="Helical; Name=1" evidence="1">
    <location>
        <begin position="24"/>
        <end position="44"/>
    </location>
</feature>
<feature type="topological domain" description="Cytoplasmic" evidence="1">
    <location>
        <begin position="45"/>
        <end position="52"/>
    </location>
</feature>
<feature type="transmembrane region" description="Helical; Name=2" evidence="1">
    <location>
        <begin position="53"/>
        <end position="73"/>
    </location>
</feature>
<feature type="topological domain" description="Extracellular" evidence="1">
    <location>
        <begin position="74"/>
        <end position="97"/>
    </location>
</feature>
<feature type="transmembrane region" description="Helical; Name=3" evidence="1">
    <location>
        <begin position="98"/>
        <end position="118"/>
    </location>
</feature>
<feature type="topological domain" description="Cytoplasmic" evidence="1">
    <location>
        <begin position="119"/>
        <end position="137"/>
    </location>
</feature>
<feature type="transmembrane region" description="Helical; Name=4" evidence="1">
    <location>
        <begin position="138"/>
        <end position="158"/>
    </location>
</feature>
<feature type="topological domain" description="Extracellular" evidence="1">
    <location>
        <begin position="159"/>
        <end position="194"/>
    </location>
</feature>
<feature type="transmembrane region" description="Helical; Name=5" evidence="1">
    <location>
        <begin position="195"/>
        <end position="215"/>
    </location>
</feature>
<feature type="topological domain" description="Cytoplasmic" evidence="1">
    <location>
        <begin position="216"/>
        <end position="235"/>
    </location>
</feature>
<feature type="transmembrane region" description="Helical; Name=6" evidence="1">
    <location>
        <begin position="236"/>
        <end position="256"/>
    </location>
</feature>
<feature type="topological domain" description="Extracellular" evidence="1">
    <location>
        <begin position="257"/>
        <end position="269"/>
    </location>
</feature>
<feature type="transmembrane region" description="Helical; Name=7" evidence="1">
    <location>
        <begin position="270"/>
        <end position="290"/>
    </location>
</feature>
<feature type="topological domain" description="Cytoplasmic" evidence="1">
    <location>
        <begin position="291"/>
        <end position="307"/>
    </location>
</feature>
<feature type="glycosylation site" description="N-linked (GlcNAc...) asparagine" evidence="1">
    <location>
        <position position="3"/>
    </location>
</feature>
<feature type="disulfide bond" evidence="2">
    <location>
        <begin position="95"/>
        <end position="187"/>
    </location>
</feature>
<feature type="sequence variant" id="VAR_057549" description="In dbSNP:rs605734." evidence="3">
    <original>L</original>
    <variation>F</variation>
    <location>
        <position position="84"/>
    </location>
</feature>
<feature type="sequence variant" id="VAR_057550" description="In dbSNP:rs17150664.">
    <original>G</original>
    <variation>S</variation>
    <location>
        <position position="163"/>
    </location>
</feature>
<protein>
    <recommendedName>
        <fullName>Olfactory receptor 5M3</fullName>
    </recommendedName>
    <alternativeName>
        <fullName>Olfactory receptor OR11-191</fullName>
    </alternativeName>
</protein>
<organism>
    <name type="scientific">Homo sapiens</name>
    <name type="common">Human</name>
    <dbReference type="NCBI Taxonomy" id="9606"/>
    <lineage>
        <taxon>Eukaryota</taxon>
        <taxon>Metazoa</taxon>
        <taxon>Chordata</taxon>
        <taxon>Craniata</taxon>
        <taxon>Vertebrata</taxon>
        <taxon>Euteleostomi</taxon>
        <taxon>Mammalia</taxon>
        <taxon>Eutheria</taxon>
        <taxon>Euarchontoglires</taxon>
        <taxon>Primates</taxon>
        <taxon>Haplorrhini</taxon>
        <taxon>Catarrhini</taxon>
        <taxon>Hominidae</taxon>
        <taxon>Homo</taxon>
    </lineage>
</organism>
<proteinExistence type="evidence at transcript level"/>
<dbReference type="EMBL" id="AB065746">
    <property type="protein sequence ID" value="BAC05966.1"/>
    <property type="molecule type" value="Genomic_DNA"/>
</dbReference>
<dbReference type="EMBL" id="CH471076">
    <property type="protein sequence ID" value="EAW73715.1"/>
    <property type="molecule type" value="Genomic_DNA"/>
</dbReference>
<dbReference type="EMBL" id="BC136982">
    <property type="protein sequence ID" value="AAI36983.1"/>
    <property type="molecule type" value="mRNA"/>
</dbReference>
<dbReference type="EMBL" id="BC136983">
    <property type="protein sequence ID" value="AAI36984.1"/>
    <property type="molecule type" value="mRNA"/>
</dbReference>
<dbReference type="EMBL" id="AF399518">
    <property type="protein sequence ID" value="AAK95003.1"/>
    <property type="molecule type" value="Genomic_DNA"/>
</dbReference>
<dbReference type="EMBL" id="BK004498">
    <property type="protein sequence ID" value="DAA04896.1"/>
    <property type="molecule type" value="Genomic_DNA"/>
</dbReference>
<dbReference type="CCDS" id="CCDS31532.1"/>
<dbReference type="RefSeq" id="NP_001004742.2">
    <property type="nucleotide sequence ID" value="NM_001004742.3"/>
</dbReference>
<dbReference type="SMR" id="Q8NGP4"/>
<dbReference type="BioGRID" id="128545">
    <property type="interactions" value="12"/>
</dbReference>
<dbReference type="FunCoup" id="Q8NGP4">
    <property type="interactions" value="416"/>
</dbReference>
<dbReference type="IntAct" id="Q8NGP4">
    <property type="interactions" value="2"/>
</dbReference>
<dbReference type="STRING" id="9606.ENSP00000493070"/>
<dbReference type="GlyCosmos" id="Q8NGP4">
    <property type="glycosylation" value="1 site, No reported glycans"/>
</dbReference>
<dbReference type="GlyGen" id="Q8NGP4">
    <property type="glycosylation" value="1 site"/>
</dbReference>
<dbReference type="iPTMnet" id="Q8NGP4"/>
<dbReference type="PhosphoSitePlus" id="Q8NGP4"/>
<dbReference type="BioMuta" id="OR5M3"/>
<dbReference type="DMDM" id="116242692"/>
<dbReference type="PaxDb" id="9606-ENSP00000312208"/>
<dbReference type="Antibodypedia" id="62745">
    <property type="antibodies" value="42 antibodies from 13 providers"/>
</dbReference>
<dbReference type="DNASU" id="219482"/>
<dbReference type="Ensembl" id="ENST00000641993.1">
    <property type="protein sequence ID" value="ENSP00000493070.1"/>
    <property type="gene ID" value="ENSG00000174937.5"/>
</dbReference>
<dbReference type="Ensembl" id="ENST00000709012.1">
    <property type="protein sequence ID" value="ENSP00000517457.1"/>
    <property type="gene ID" value="ENSG00000291859.1"/>
</dbReference>
<dbReference type="GeneID" id="219482"/>
<dbReference type="KEGG" id="hsa:219482"/>
<dbReference type="MANE-Select" id="ENST00000641993.1">
    <property type="protein sequence ID" value="ENSP00000493070.1"/>
    <property type="RefSeq nucleotide sequence ID" value="NM_001004742.3"/>
    <property type="RefSeq protein sequence ID" value="NP_001004742.2"/>
</dbReference>
<dbReference type="UCSC" id="uc010rjk.3">
    <property type="organism name" value="human"/>
</dbReference>
<dbReference type="AGR" id="HGNC:14806"/>
<dbReference type="CTD" id="219482"/>
<dbReference type="DisGeNET" id="219482"/>
<dbReference type="GeneCards" id="OR5M3"/>
<dbReference type="HGNC" id="HGNC:14806">
    <property type="gene designation" value="OR5M3"/>
</dbReference>
<dbReference type="HPA" id="ENSG00000174937">
    <property type="expression patterns" value="Not detected"/>
</dbReference>
<dbReference type="neXtProt" id="NX_Q8NGP4"/>
<dbReference type="OpenTargets" id="ENSG00000174937"/>
<dbReference type="PharmGKB" id="PA32553"/>
<dbReference type="VEuPathDB" id="HostDB:ENSG00000174937"/>
<dbReference type="eggNOG" id="ENOG502SJ6M">
    <property type="taxonomic scope" value="Eukaryota"/>
</dbReference>
<dbReference type="GeneTree" id="ENSGT01120000271889"/>
<dbReference type="HOGENOM" id="CLU_012526_5_5_1"/>
<dbReference type="InParanoid" id="Q8NGP4"/>
<dbReference type="OMA" id="YASCLVQ"/>
<dbReference type="OrthoDB" id="9518048at2759"/>
<dbReference type="PAN-GO" id="Q8NGP4">
    <property type="GO annotations" value="4 GO annotations based on evolutionary models"/>
</dbReference>
<dbReference type="PhylomeDB" id="Q8NGP4"/>
<dbReference type="TreeFam" id="TF352751"/>
<dbReference type="PathwayCommons" id="Q8NGP4"/>
<dbReference type="Reactome" id="R-HSA-9752946">
    <property type="pathway name" value="Expression and translocation of olfactory receptors"/>
</dbReference>
<dbReference type="BioGRID-ORCS" id="219482">
    <property type="hits" value="13 hits in 710 CRISPR screens"/>
</dbReference>
<dbReference type="GeneWiki" id="OR5M3"/>
<dbReference type="GenomeRNAi" id="219482"/>
<dbReference type="Pharos" id="Q8NGP4">
    <property type="development level" value="Tdark"/>
</dbReference>
<dbReference type="PRO" id="PR:Q8NGP4"/>
<dbReference type="Proteomes" id="UP000005640">
    <property type="component" value="Chromosome 11"/>
</dbReference>
<dbReference type="RNAct" id="Q8NGP4">
    <property type="molecule type" value="protein"/>
</dbReference>
<dbReference type="GO" id="GO:0005886">
    <property type="term" value="C:plasma membrane"/>
    <property type="evidence" value="ECO:0007669"/>
    <property type="project" value="UniProtKB-SubCell"/>
</dbReference>
<dbReference type="GO" id="GO:0004930">
    <property type="term" value="F:G protein-coupled receptor activity"/>
    <property type="evidence" value="ECO:0007669"/>
    <property type="project" value="UniProtKB-KW"/>
</dbReference>
<dbReference type="GO" id="GO:0005549">
    <property type="term" value="F:odorant binding"/>
    <property type="evidence" value="ECO:0000318"/>
    <property type="project" value="GO_Central"/>
</dbReference>
<dbReference type="GO" id="GO:0004984">
    <property type="term" value="F:olfactory receptor activity"/>
    <property type="evidence" value="ECO:0000318"/>
    <property type="project" value="GO_Central"/>
</dbReference>
<dbReference type="GO" id="GO:0007186">
    <property type="term" value="P:G protein-coupled receptor signaling pathway"/>
    <property type="evidence" value="ECO:0000318"/>
    <property type="project" value="GO_Central"/>
</dbReference>
<dbReference type="GO" id="GO:0007608">
    <property type="term" value="P:sensory perception of smell"/>
    <property type="evidence" value="ECO:0000318"/>
    <property type="project" value="GO_Central"/>
</dbReference>
<dbReference type="CDD" id="cd15412">
    <property type="entry name" value="7tmA_OR5M-like"/>
    <property type="match status" value="1"/>
</dbReference>
<dbReference type="FunFam" id="1.10.1220.70:FF:000001">
    <property type="entry name" value="Olfactory receptor"/>
    <property type="match status" value="1"/>
</dbReference>
<dbReference type="FunFam" id="1.20.1070.10:FF:000003">
    <property type="entry name" value="Olfactory receptor"/>
    <property type="match status" value="1"/>
</dbReference>
<dbReference type="Gene3D" id="1.20.1070.10">
    <property type="entry name" value="Rhodopsin 7-helix transmembrane proteins"/>
    <property type="match status" value="1"/>
</dbReference>
<dbReference type="InterPro" id="IPR000276">
    <property type="entry name" value="GPCR_Rhodpsn"/>
</dbReference>
<dbReference type="InterPro" id="IPR017452">
    <property type="entry name" value="GPCR_Rhodpsn_7TM"/>
</dbReference>
<dbReference type="InterPro" id="IPR000725">
    <property type="entry name" value="Olfact_rcpt"/>
</dbReference>
<dbReference type="PANTHER" id="PTHR48018">
    <property type="entry name" value="OLFACTORY RECEPTOR"/>
    <property type="match status" value="1"/>
</dbReference>
<dbReference type="Pfam" id="PF13853">
    <property type="entry name" value="7tm_4"/>
    <property type="match status" value="1"/>
</dbReference>
<dbReference type="PRINTS" id="PR00237">
    <property type="entry name" value="GPCRRHODOPSN"/>
</dbReference>
<dbReference type="PRINTS" id="PR00245">
    <property type="entry name" value="OLFACTORYR"/>
</dbReference>
<dbReference type="SUPFAM" id="SSF81321">
    <property type="entry name" value="Family A G protein-coupled receptor-like"/>
    <property type="match status" value="1"/>
</dbReference>
<dbReference type="PROSITE" id="PS00237">
    <property type="entry name" value="G_PROTEIN_RECEP_F1_1"/>
    <property type="match status" value="1"/>
</dbReference>
<dbReference type="PROSITE" id="PS50262">
    <property type="entry name" value="G_PROTEIN_RECEP_F1_2"/>
    <property type="match status" value="1"/>
</dbReference>
<comment type="function">
    <text evidence="4">Odorant receptor.</text>
</comment>
<comment type="subcellular location">
    <subcellularLocation>
        <location>Cell membrane</location>
        <topology>Multi-pass membrane protein</topology>
    </subcellularLocation>
</comment>
<comment type="similarity">
    <text evidence="2">Belongs to the G-protein coupled receptor 1 family.</text>
</comment>
<comment type="online information" name="Human Olfactory Receptor Data Exploratorium (HORDE)">
    <link uri="http://genome.weizmann.ac.il/horde/card/index/symbol:OR5M3"/>
</comment>
<evidence type="ECO:0000255" key="1"/>
<evidence type="ECO:0000255" key="2">
    <source>
        <dbReference type="PROSITE-ProRule" id="PRU00521"/>
    </source>
</evidence>
<evidence type="ECO:0000269" key="3">
    <source ref="1"/>
</evidence>
<evidence type="ECO:0000305" key="4"/>
<sequence length="307" mass="35156">MLNFTDVTEFILLGLTSRREWQVLFFIIFLVVYIITMVGNIGMMVLIKVSPQLNNPMYFFLSHLSFVDVWFSSNVTPKMLENLLSDKKTITYAGCLVQCFFFIALVHVEIFILAAMAFDRYMAIGNPLLYGSKMSRVVCIRLITFPYIYGFLTSLAATLWTYGLYFCGKIEINHFYCADPPLIKMACAGTFVKEYTMIILAGINFTYSLTVIIISYLFILIAILRMRSAEGRQKAFSTCGSHLTAVIIFYGTLIFMYLRRPTEESVEQGKMVAVFYTTVIPMLNPMIYSLRNKDVKKAMMKVISRSC</sequence>
<reference key="1">
    <citation type="submission" date="2001-07" db="EMBL/GenBank/DDBJ databases">
        <title>Genome-wide discovery and analysis of human seven transmembrane helix receptor genes.</title>
        <authorList>
            <person name="Suwa M."/>
            <person name="Sato T."/>
            <person name="Okouchi I."/>
            <person name="Arita M."/>
            <person name="Futami K."/>
            <person name="Matsumoto S."/>
            <person name="Tsutsumi S."/>
            <person name="Aburatani H."/>
            <person name="Asai K."/>
            <person name="Akiyama Y."/>
        </authorList>
    </citation>
    <scope>NUCLEOTIDE SEQUENCE [GENOMIC DNA]</scope>
    <scope>VARIANT PHE-84</scope>
</reference>
<reference key="2">
    <citation type="submission" date="2005-07" db="EMBL/GenBank/DDBJ databases">
        <authorList>
            <person name="Mural R.J."/>
            <person name="Istrail S."/>
            <person name="Sutton G.G."/>
            <person name="Florea L."/>
            <person name="Halpern A.L."/>
            <person name="Mobarry C.M."/>
            <person name="Lippert R."/>
            <person name="Walenz B."/>
            <person name="Shatkay H."/>
            <person name="Dew I."/>
            <person name="Miller J.R."/>
            <person name="Flanigan M.J."/>
            <person name="Edwards N.J."/>
            <person name="Bolanos R."/>
            <person name="Fasulo D."/>
            <person name="Halldorsson B.V."/>
            <person name="Hannenhalli S."/>
            <person name="Turner R."/>
            <person name="Yooseph S."/>
            <person name="Lu F."/>
            <person name="Nusskern D.R."/>
            <person name="Shue B.C."/>
            <person name="Zheng X.H."/>
            <person name="Zhong F."/>
            <person name="Delcher A.L."/>
            <person name="Huson D.H."/>
            <person name="Kravitz S.A."/>
            <person name="Mouchard L."/>
            <person name="Reinert K."/>
            <person name="Remington K.A."/>
            <person name="Clark A.G."/>
            <person name="Waterman M.S."/>
            <person name="Eichler E.E."/>
            <person name="Adams M.D."/>
            <person name="Hunkapiller M.W."/>
            <person name="Myers E.W."/>
            <person name="Venter J.C."/>
        </authorList>
    </citation>
    <scope>NUCLEOTIDE SEQUENCE [LARGE SCALE GENOMIC DNA]</scope>
</reference>
<reference key="3">
    <citation type="journal article" date="2004" name="Genome Res.">
        <title>The status, quality, and expansion of the NIH full-length cDNA project: the Mammalian Gene Collection (MGC).</title>
        <authorList>
            <consortium name="The MGC Project Team"/>
        </authorList>
    </citation>
    <scope>NUCLEOTIDE SEQUENCE [LARGE SCALE MRNA]</scope>
</reference>
<reference key="4">
    <citation type="journal article" date="2002" name="Genomics">
        <title>DEFOG: a practical scheme for deciphering families of genes.</title>
        <authorList>
            <person name="Fuchs T."/>
            <person name="Malecova B."/>
            <person name="Linhart C."/>
            <person name="Sharan R."/>
            <person name="Khen M."/>
            <person name="Herwig R."/>
            <person name="Shmulevich D."/>
            <person name="Elkon R."/>
            <person name="Steinfath M."/>
            <person name="O'Brien J.K."/>
            <person name="Radelof U."/>
            <person name="Lehrach H."/>
            <person name="Lancet D."/>
            <person name="Shamir R."/>
        </authorList>
    </citation>
    <scope>NUCLEOTIDE SEQUENCE [GENOMIC DNA] OF 66-281</scope>
</reference>
<reference key="5">
    <citation type="journal article" date="2004" name="Proc. Natl. Acad. Sci. U.S.A.">
        <title>The human olfactory receptor gene family.</title>
        <authorList>
            <person name="Malnic B."/>
            <person name="Godfrey P.A."/>
            <person name="Buck L.B."/>
        </authorList>
    </citation>
    <scope>IDENTIFICATION</scope>
</reference>
<reference key="6">
    <citation type="journal article" date="2004" name="Proc. Natl. Acad. Sci. U.S.A.">
        <authorList>
            <person name="Malnic B."/>
            <person name="Godfrey P.A."/>
            <person name="Buck L.B."/>
        </authorList>
    </citation>
    <scope>ERRATUM OF PUBMED:14983052</scope>
</reference>
<accession>Q8NGP4</accession>
<accession>B2RNM7</accession>
<accession>Q6IEW4</accession>
<accession>Q96RC0</accession>
<gene>
    <name type="primary">OR5M3</name>
</gene>
<keyword id="KW-1003">Cell membrane</keyword>
<keyword id="KW-1015">Disulfide bond</keyword>
<keyword id="KW-0297">G-protein coupled receptor</keyword>
<keyword id="KW-0325">Glycoprotein</keyword>
<keyword id="KW-0472">Membrane</keyword>
<keyword id="KW-0552">Olfaction</keyword>
<keyword id="KW-0675">Receptor</keyword>
<keyword id="KW-1185">Reference proteome</keyword>
<keyword id="KW-0716">Sensory transduction</keyword>
<keyword id="KW-0807">Transducer</keyword>
<keyword id="KW-0812">Transmembrane</keyword>
<keyword id="KW-1133">Transmembrane helix</keyword>